<sequence length="176" mass="19489">MTLQPNLQAKEMELSLVGLQNSGKTSLVNVVATGEYSEDMIPTVGFNMRKVTKENVAIRLWDLGGQPRFRCMWERYCRAVSMIVYVVDAADTENLSVSRSELHDLLSNASLIGIPLLVLGNKIDIHGALSKEALTEEMGLSSVTSREVCCLMISCKNPTTIDQLTDWLVNHSKSKN</sequence>
<comment type="function">
    <text evidence="2">May play a role in lysosome motility. May play a role in chromosome segregation.</text>
</comment>
<comment type="subunit">
    <text evidence="2">Interacts with tubulin.</text>
</comment>
<comment type="subcellular location">
    <subcellularLocation>
        <location evidence="2">Late endosome membrane</location>
    </subcellularLocation>
    <subcellularLocation>
        <location evidence="2">Lysosome membrane</location>
    </subcellularLocation>
    <subcellularLocation>
        <location evidence="2">Cytoplasm</location>
        <location evidence="2">Cytoskeleton</location>
        <location evidence="2">Spindle</location>
    </subcellularLocation>
    <text evidence="2">Localizes with microtubules at the spindle mid-zone during mitosis.</text>
</comment>
<comment type="similarity">
    <text evidence="5">Belongs to the small GTPase superfamily. Arf family.</text>
</comment>
<comment type="sequence caution" evidence="5">
    <conflict type="erroneous initiation">
        <sequence resource="EMBL-CDS" id="CAB66924"/>
    </conflict>
    <text>Truncated N-terminus.</text>
</comment>
<accession>F4IZ82</accession>
<accession>Q9M2X2</accession>
<gene>
    <name evidence="4" type="primary">ARL8D</name>
    <name evidence="3" type="synonym">ARLA1B</name>
    <name evidence="6" type="ordered locus">At3g49860</name>
    <name evidence="7" type="ORF">T16K5.210</name>
</gene>
<dbReference type="EMBL" id="AL132965">
    <property type="protein sequence ID" value="CAB66924.1"/>
    <property type="status" value="ALT_INIT"/>
    <property type="molecule type" value="Genomic_DNA"/>
</dbReference>
<dbReference type="EMBL" id="CP002686">
    <property type="protein sequence ID" value="AEE78599.1"/>
    <property type="molecule type" value="Genomic_DNA"/>
</dbReference>
<dbReference type="PIR" id="T46052">
    <property type="entry name" value="T46052"/>
</dbReference>
<dbReference type="RefSeq" id="NP_190555.2">
    <property type="nucleotide sequence ID" value="NM_114846.4"/>
</dbReference>
<dbReference type="SMR" id="F4IZ82"/>
<dbReference type="FunCoup" id="F4IZ82">
    <property type="interactions" value="2899"/>
</dbReference>
<dbReference type="STRING" id="3702.F4IZ82"/>
<dbReference type="PaxDb" id="3702-AT3G49860.1"/>
<dbReference type="ProteomicsDB" id="240615"/>
<dbReference type="EnsemblPlants" id="AT3G49860.1">
    <property type="protein sequence ID" value="AT3G49860.1"/>
    <property type="gene ID" value="AT3G49860"/>
</dbReference>
<dbReference type="GeneID" id="824148"/>
<dbReference type="Gramene" id="AT3G49860.1">
    <property type="protein sequence ID" value="AT3G49860.1"/>
    <property type="gene ID" value="AT3G49860"/>
</dbReference>
<dbReference type="KEGG" id="ath:AT3G49860"/>
<dbReference type="Araport" id="AT3G49860"/>
<dbReference type="TAIR" id="AT3G49860">
    <property type="gene designation" value="ARLA1B"/>
</dbReference>
<dbReference type="eggNOG" id="KOG0075">
    <property type="taxonomic scope" value="Eukaryota"/>
</dbReference>
<dbReference type="HOGENOM" id="CLU_040729_10_3_1"/>
<dbReference type="InParanoid" id="F4IZ82"/>
<dbReference type="OMA" id="KICLCGP"/>
<dbReference type="PRO" id="PR:F4IZ82"/>
<dbReference type="Proteomes" id="UP000006548">
    <property type="component" value="Chromosome 3"/>
</dbReference>
<dbReference type="ExpressionAtlas" id="F4IZ82">
    <property type="expression patterns" value="baseline and differential"/>
</dbReference>
<dbReference type="GO" id="GO:0031902">
    <property type="term" value="C:late endosome membrane"/>
    <property type="evidence" value="ECO:0007669"/>
    <property type="project" value="UniProtKB-SubCell"/>
</dbReference>
<dbReference type="GO" id="GO:0005765">
    <property type="term" value="C:lysosomal membrane"/>
    <property type="evidence" value="ECO:0007669"/>
    <property type="project" value="UniProtKB-SubCell"/>
</dbReference>
<dbReference type="GO" id="GO:0005819">
    <property type="term" value="C:spindle"/>
    <property type="evidence" value="ECO:0007669"/>
    <property type="project" value="UniProtKB-SubCell"/>
</dbReference>
<dbReference type="GO" id="GO:0005525">
    <property type="term" value="F:GTP binding"/>
    <property type="evidence" value="ECO:0000250"/>
    <property type="project" value="TAIR"/>
</dbReference>
<dbReference type="GO" id="GO:0003924">
    <property type="term" value="F:GTPase activity"/>
    <property type="evidence" value="ECO:0007669"/>
    <property type="project" value="InterPro"/>
</dbReference>
<dbReference type="GO" id="GO:0051301">
    <property type="term" value="P:cell division"/>
    <property type="evidence" value="ECO:0007669"/>
    <property type="project" value="UniProtKB-KW"/>
</dbReference>
<dbReference type="GO" id="GO:0007059">
    <property type="term" value="P:chromosome segregation"/>
    <property type="evidence" value="ECO:0007669"/>
    <property type="project" value="UniProtKB-KW"/>
</dbReference>
<dbReference type="GO" id="GO:0051607">
    <property type="term" value="P:defense response to virus"/>
    <property type="evidence" value="ECO:0000316"/>
    <property type="project" value="TAIR"/>
</dbReference>
<dbReference type="GO" id="GO:0015031">
    <property type="term" value="P:protein transport"/>
    <property type="evidence" value="ECO:0007669"/>
    <property type="project" value="InterPro"/>
</dbReference>
<dbReference type="CDD" id="cd04159">
    <property type="entry name" value="Arl10_like"/>
    <property type="match status" value="1"/>
</dbReference>
<dbReference type="FunFam" id="3.40.50.300:FF:000441">
    <property type="entry name" value="ADP-ribosylation factor-like protein 8a"/>
    <property type="match status" value="1"/>
</dbReference>
<dbReference type="Gene3D" id="3.40.50.300">
    <property type="entry name" value="P-loop containing nucleotide triphosphate hydrolases"/>
    <property type="match status" value="1"/>
</dbReference>
<dbReference type="InterPro" id="IPR044154">
    <property type="entry name" value="Arl8a/8b"/>
</dbReference>
<dbReference type="InterPro" id="IPR027417">
    <property type="entry name" value="P-loop_NTPase"/>
</dbReference>
<dbReference type="InterPro" id="IPR005225">
    <property type="entry name" value="Small_GTP-bd"/>
</dbReference>
<dbReference type="InterPro" id="IPR006689">
    <property type="entry name" value="Small_GTPase_ARF/SAR"/>
</dbReference>
<dbReference type="NCBIfam" id="TIGR00231">
    <property type="entry name" value="small_GTP"/>
    <property type="match status" value="1"/>
</dbReference>
<dbReference type="PANTHER" id="PTHR45732">
    <property type="entry name" value="ADP-RIBOSYLATION FACTOR-LIKE PROTEIN 8"/>
    <property type="match status" value="1"/>
</dbReference>
<dbReference type="PANTHER" id="PTHR45732:SF17">
    <property type="entry name" value="ADP-RIBOSYLATION FACTOR-LIKE PROTEIN 8A-RELATED"/>
    <property type="match status" value="1"/>
</dbReference>
<dbReference type="Pfam" id="PF00025">
    <property type="entry name" value="Arf"/>
    <property type="match status" value="1"/>
</dbReference>
<dbReference type="PRINTS" id="PR00328">
    <property type="entry name" value="SAR1GTPBP"/>
</dbReference>
<dbReference type="SMART" id="SM00177">
    <property type="entry name" value="ARF"/>
    <property type="match status" value="1"/>
</dbReference>
<dbReference type="SMART" id="SM00175">
    <property type="entry name" value="RAB"/>
    <property type="match status" value="1"/>
</dbReference>
<dbReference type="SMART" id="SM00173">
    <property type="entry name" value="RAS"/>
    <property type="match status" value="1"/>
</dbReference>
<dbReference type="SMART" id="SM00178">
    <property type="entry name" value="SAR"/>
    <property type="match status" value="1"/>
</dbReference>
<dbReference type="SUPFAM" id="SSF52540">
    <property type="entry name" value="P-loop containing nucleoside triphosphate hydrolases"/>
    <property type="match status" value="1"/>
</dbReference>
<dbReference type="PROSITE" id="PS51417">
    <property type="entry name" value="ARF"/>
    <property type="match status" value="1"/>
</dbReference>
<keyword id="KW-0131">Cell cycle</keyword>
<keyword id="KW-0132">Cell division</keyword>
<keyword id="KW-0159">Chromosome partition</keyword>
<keyword id="KW-0963">Cytoplasm</keyword>
<keyword id="KW-0206">Cytoskeleton</keyword>
<keyword id="KW-0967">Endosome</keyword>
<keyword id="KW-0342">GTP-binding</keyword>
<keyword id="KW-0458">Lysosome</keyword>
<keyword id="KW-0472">Membrane</keyword>
<keyword id="KW-0498">Mitosis</keyword>
<keyword id="KW-0547">Nucleotide-binding</keyword>
<keyword id="KW-1185">Reference proteome</keyword>
<evidence type="ECO:0000250" key="1">
    <source>
        <dbReference type="UniProtKB" id="P62330"/>
    </source>
</evidence>
<evidence type="ECO:0000250" key="2">
    <source>
        <dbReference type="UniProtKB" id="Q9NVJ2"/>
    </source>
</evidence>
<evidence type="ECO:0000303" key="3">
    <source>
    </source>
</evidence>
<evidence type="ECO:0000303" key="4">
    <source>
    </source>
</evidence>
<evidence type="ECO:0000305" key="5"/>
<evidence type="ECO:0000312" key="6">
    <source>
        <dbReference type="Araport" id="AT3G49860"/>
    </source>
</evidence>
<evidence type="ECO:0000312" key="7">
    <source>
        <dbReference type="EMBL" id="CAB66924.1"/>
    </source>
</evidence>
<feature type="chain" id="PRO_0000438006" description="ADP-ribosylation factor-like protein 8d">
    <location>
        <begin position="1"/>
        <end position="176"/>
    </location>
</feature>
<feature type="binding site" evidence="1">
    <location>
        <begin position="21"/>
        <end position="26"/>
    </location>
    <ligand>
        <name>GTP</name>
        <dbReference type="ChEBI" id="CHEBI:37565"/>
    </ligand>
</feature>
<feature type="binding site" evidence="1">
    <location>
        <begin position="40"/>
        <end position="43"/>
    </location>
    <ligand>
        <name>GTP</name>
        <dbReference type="ChEBI" id="CHEBI:37565"/>
    </ligand>
</feature>
<feature type="binding site" evidence="1">
    <location>
        <begin position="62"/>
        <end position="66"/>
    </location>
    <ligand>
        <name>GTP</name>
        <dbReference type="ChEBI" id="CHEBI:37565"/>
    </ligand>
</feature>
<feature type="binding site" evidence="1">
    <location>
        <begin position="121"/>
        <end position="124"/>
    </location>
    <ligand>
        <name>GTP</name>
        <dbReference type="ChEBI" id="CHEBI:37565"/>
    </ligand>
</feature>
<proteinExistence type="inferred from homology"/>
<organism>
    <name type="scientific">Arabidopsis thaliana</name>
    <name type="common">Mouse-ear cress</name>
    <dbReference type="NCBI Taxonomy" id="3702"/>
    <lineage>
        <taxon>Eukaryota</taxon>
        <taxon>Viridiplantae</taxon>
        <taxon>Streptophyta</taxon>
        <taxon>Embryophyta</taxon>
        <taxon>Tracheophyta</taxon>
        <taxon>Spermatophyta</taxon>
        <taxon>Magnoliopsida</taxon>
        <taxon>eudicotyledons</taxon>
        <taxon>Gunneridae</taxon>
        <taxon>Pentapetalae</taxon>
        <taxon>rosids</taxon>
        <taxon>malvids</taxon>
        <taxon>Brassicales</taxon>
        <taxon>Brassicaceae</taxon>
        <taxon>Camelineae</taxon>
        <taxon>Arabidopsis</taxon>
    </lineage>
</organism>
<protein>
    <recommendedName>
        <fullName evidence="4">ADP-ribosylation factor-like protein 8d</fullName>
        <shortName evidence="4">AtARL8d</shortName>
    </recommendedName>
    <alternativeName>
        <fullName evidence="3">ADP-ribosylation factor-like A1B</fullName>
        <shortName evidence="3">AtARLA1B</shortName>
    </alternativeName>
</protein>
<name>ARL8D_ARATH</name>
<reference key="1">
    <citation type="journal article" date="2000" name="Nature">
        <title>Sequence and analysis of chromosome 3 of the plant Arabidopsis thaliana.</title>
        <authorList>
            <person name="Salanoubat M."/>
            <person name="Lemcke K."/>
            <person name="Rieger M."/>
            <person name="Ansorge W."/>
            <person name="Unseld M."/>
            <person name="Fartmann B."/>
            <person name="Valle G."/>
            <person name="Bloecker H."/>
            <person name="Perez-Alonso M."/>
            <person name="Obermaier B."/>
            <person name="Delseny M."/>
            <person name="Boutry M."/>
            <person name="Grivell L.A."/>
            <person name="Mache R."/>
            <person name="Puigdomenech P."/>
            <person name="De Simone V."/>
            <person name="Choisne N."/>
            <person name="Artiguenave F."/>
            <person name="Robert C."/>
            <person name="Brottier P."/>
            <person name="Wincker P."/>
            <person name="Cattolico L."/>
            <person name="Weissenbach J."/>
            <person name="Saurin W."/>
            <person name="Quetier F."/>
            <person name="Schaefer M."/>
            <person name="Mueller-Auer S."/>
            <person name="Gabel C."/>
            <person name="Fuchs M."/>
            <person name="Benes V."/>
            <person name="Wurmbach E."/>
            <person name="Drzonek H."/>
            <person name="Erfle H."/>
            <person name="Jordan N."/>
            <person name="Bangert S."/>
            <person name="Wiedelmann R."/>
            <person name="Kranz H."/>
            <person name="Voss H."/>
            <person name="Holland R."/>
            <person name="Brandt P."/>
            <person name="Nyakatura G."/>
            <person name="Vezzi A."/>
            <person name="D'Angelo M."/>
            <person name="Pallavicini A."/>
            <person name="Toppo S."/>
            <person name="Simionati B."/>
            <person name="Conrad A."/>
            <person name="Hornischer K."/>
            <person name="Kauer G."/>
            <person name="Loehnert T.-H."/>
            <person name="Nordsiek G."/>
            <person name="Reichelt J."/>
            <person name="Scharfe M."/>
            <person name="Schoen O."/>
            <person name="Bargues M."/>
            <person name="Terol J."/>
            <person name="Climent J."/>
            <person name="Navarro P."/>
            <person name="Collado C."/>
            <person name="Perez-Perez A."/>
            <person name="Ottenwaelder B."/>
            <person name="Duchemin D."/>
            <person name="Cooke R."/>
            <person name="Laudie M."/>
            <person name="Berger-Llauro C."/>
            <person name="Purnelle B."/>
            <person name="Masuy D."/>
            <person name="de Haan M."/>
            <person name="Maarse A.C."/>
            <person name="Alcaraz J.-P."/>
            <person name="Cottet A."/>
            <person name="Casacuberta E."/>
            <person name="Monfort A."/>
            <person name="Argiriou A."/>
            <person name="Flores M."/>
            <person name="Liguori R."/>
            <person name="Vitale D."/>
            <person name="Mannhaupt G."/>
            <person name="Haase D."/>
            <person name="Schoof H."/>
            <person name="Rudd S."/>
            <person name="Zaccaria P."/>
            <person name="Mewes H.-W."/>
            <person name="Mayer K.F.X."/>
            <person name="Kaul S."/>
            <person name="Town C.D."/>
            <person name="Koo H.L."/>
            <person name="Tallon L.J."/>
            <person name="Jenkins J."/>
            <person name="Rooney T."/>
            <person name="Rizzo M."/>
            <person name="Walts A."/>
            <person name="Utterback T."/>
            <person name="Fujii C.Y."/>
            <person name="Shea T.P."/>
            <person name="Creasy T.H."/>
            <person name="Haas B."/>
            <person name="Maiti R."/>
            <person name="Wu D."/>
            <person name="Peterson J."/>
            <person name="Van Aken S."/>
            <person name="Pai G."/>
            <person name="Militscher J."/>
            <person name="Sellers P."/>
            <person name="Gill J.E."/>
            <person name="Feldblyum T.V."/>
            <person name="Preuss D."/>
            <person name="Lin X."/>
            <person name="Nierman W.C."/>
            <person name="Salzberg S.L."/>
            <person name="White O."/>
            <person name="Venter J.C."/>
            <person name="Fraser C.M."/>
            <person name="Kaneko T."/>
            <person name="Nakamura Y."/>
            <person name="Sato S."/>
            <person name="Kato T."/>
            <person name="Asamizu E."/>
            <person name="Sasamoto S."/>
            <person name="Kimura T."/>
            <person name="Idesawa K."/>
            <person name="Kawashima K."/>
            <person name="Kishida Y."/>
            <person name="Kiyokawa C."/>
            <person name="Kohara M."/>
            <person name="Matsumoto M."/>
            <person name="Matsuno A."/>
            <person name="Muraki A."/>
            <person name="Nakayama S."/>
            <person name="Nakazaki N."/>
            <person name="Shinpo S."/>
            <person name="Takeuchi C."/>
            <person name="Wada T."/>
            <person name="Watanabe A."/>
            <person name="Yamada M."/>
            <person name="Yasuda M."/>
            <person name="Tabata S."/>
        </authorList>
    </citation>
    <scope>NUCLEOTIDE SEQUENCE [LARGE SCALE GENOMIC DNA]</scope>
    <source>
        <strain>cv. Columbia</strain>
    </source>
</reference>
<reference key="2">
    <citation type="journal article" date="2017" name="Plant J.">
        <title>Araport11: a complete reannotation of the Arabidopsis thaliana reference genome.</title>
        <authorList>
            <person name="Cheng C.Y."/>
            <person name="Krishnakumar V."/>
            <person name="Chan A.P."/>
            <person name="Thibaud-Nissen F."/>
            <person name="Schobel S."/>
            <person name="Town C.D."/>
        </authorList>
    </citation>
    <scope>GENOME REANNOTATION</scope>
    <source>
        <strain>cv. Columbia</strain>
    </source>
</reference>
<reference key="3">
    <citation type="journal article" date="2003" name="Plant Physiol.">
        <title>Analysis of the small GTPase gene superfamily of Arabidopsis.</title>
        <authorList>
            <person name="Vernoud V."/>
            <person name="Horton A.C."/>
            <person name="Yang Z."/>
            <person name="Nielsen E."/>
        </authorList>
    </citation>
    <scope>GENE FAMILY</scope>
    <scope>NOMENCLATURE</scope>
</reference>
<reference key="4">
    <citation type="journal article" date="2005" name="J. Exp. Bot.">
        <title>Genes encoding ADP-ribosylation factors in Arabidopsis thaliana; genome analysis and antisense suppression.</title>
        <authorList>
            <person name="Gebbie L.K."/>
            <person name="Burn J.E."/>
            <person name="Hocart C.H."/>
            <person name="Williamson R.E."/>
        </authorList>
    </citation>
    <scope>GENE FAMILY</scope>
</reference>
<reference key="5">
    <citation type="journal article" date="2011" name="PLoS Pathog.">
        <title>A host small GTP-binding protein ARL8 plays crucial roles in tobamovirus RNA replication.</title>
        <authorList>
            <person name="Nishikiori M."/>
            <person name="Mori M."/>
            <person name="Dohi K."/>
            <person name="Okamura H."/>
            <person name="Katoh E."/>
            <person name="Naito S."/>
            <person name="Meshi T."/>
            <person name="Ishikawa M."/>
        </authorList>
    </citation>
    <scope>GENE FAMILY</scope>
    <scope>NOMENCLATURE</scope>
    <source>
        <strain>cv. Columbia</strain>
    </source>
</reference>